<reference key="1">
    <citation type="journal article" date="1993" name="Mol. Phylogenet. Evol.">
        <title>Molecular phylogeny of the New World monkeys (Platyrrhini, primates).</title>
        <authorList>
            <person name="Schneider H."/>
            <person name="Schneider M.P.C."/>
            <person name="Sampaio I."/>
            <person name="Harada M.L."/>
            <person name="Stanhope M.J."/>
            <person name="Czekysbuaj J."/>
            <person name="Goodman M."/>
        </authorList>
    </citation>
    <scope>NUCLEOTIDE SEQUENCE [GENOMIC DNA]</scope>
    <source>
        <tissue>Lymphocyte</tissue>
    </source>
</reference>
<accession>P68027</accession>
<accession>P51439</accession>
<evidence type="ECO:0000250" key="1">
    <source>
        <dbReference type="UniProtKB" id="P02100"/>
    </source>
</evidence>
<evidence type="ECO:0000255" key="2">
    <source>
        <dbReference type="PROSITE-ProRule" id="PRU00238"/>
    </source>
</evidence>
<protein>
    <recommendedName>
        <fullName>Hemoglobin subunit epsilon</fullName>
    </recommendedName>
    <alternativeName>
        <fullName>Epsilon-globin</fullName>
    </alternativeName>
    <alternativeName>
        <fullName>Hemoglobin epsilon chain</fullName>
    </alternativeName>
</protein>
<gene>
    <name type="primary">HBE1</name>
</gene>
<proteinExistence type="evidence at transcript level"/>
<sequence length="147" mass="16244">MVHFTAEEKAAITSLWGKMNVEEAGGEALGRLLVVYPWTQRFFDNFGNLSSPSAILGNPKVKAHGKKVLTSFGDAIKNMDNLKTTFAKLSELHCDKLHVDPENFRLLGNVLVIILATHFGKEFTPEVQAAWQKLVSAVAIALGHKYH</sequence>
<name>HBE_CEBPY</name>
<keyword id="KW-0349">Heme</keyword>
<keyword id="KW-0408">Iron</keyword>
<keyword id="KW-0479">Metal-binding</keyword>
<keyword id="KW-0561">Oxygen transport</keyword>
<keyword id="KW-0597">Phosphoprotein</keyword>
<keyword id="KW-0813">Transport</keyword>
<organism>
    <name type="scientific">Cebuella pygmaea</name>
    <name type="common">Pygmy marmoset</name>
    <name type="synonym">Callithrix pygmaea</name>
    <dbReference type="NCBI Taxonomy" id="9493"/>
    <lineage>
        <taxon>Eukaryota</taxon>
        <taxon>Metazoa</taxon>
        <taxon>Chordata</taxon>
        <taxon>Craniata</taxon>
        <taxon>Vertebrata</taxon>
        <taxon>Euteleostomi</taxon>
        <taxon>Mammalia</taxon>
        <taxon>Eutheria</taxon>
        <taxon>Euarchontoglires</taxon>
        <taxon>Primates</taxon>
        <taxon>Haplorrhini</taxon>
        <taxon>Platyrrhini</taxon>
        <taxon>Cebidae</taxon>
        <taxon>Callitrichinae</taxon>
        <taxon>Cebuella</taxon>
    </lineage>
</organism>
<dbReference type="EMBL" id="L25361">
    <property type="protein sequence ID" value="AAA35402.1"/>
    <property type="molecule type" value="Genomic_DNA"/>
</dbReference>
<dbReference type="SMR" id="P68027"/>
<dbReference type="GO" id="GO:0072562">
    <property type="term" value="C:blood microparticle"/>
    <property type="evidence" value="ECO:0007669"/>
    <property type="project" value="TreeGrafter"/>
</dbReference>
<dbReference type="GO" id="GO:0031838">
    <property type="term" value="C:haptoglobin-hemoglobin complex"/>
    <property type="evidence" value="ECO:0007669"/>
    <property type="project" value="TreeGrafter"/>
</dbReference>
<dbReference type="GO" id="GO:0005833">
    <property type="term" value="C:hemoglobin complex"/>
    <property type="evidence" value="ECO:0007669"/>
    <property type="project" value="InterPro"/>
</dbReference>
<dbReference type="GO" id="GO:0031720">
    <property type="term" value="F:haptoglobin binding"/>
    <property type="evidence" value="ECO:0007669"/>
    <property type="project" value="TreeGrafter"/>
</dbReference>
<dbReference type="GO" id="GO:0020037">
    <property type="term" value="F:heme binding"/>
    <property type="evidence" value="ECO:0007669"/>
    <property type="project" value="InterPro"/>
</dbReference>
<dbReference type="GO" id="GO:0031721">
    <property type="term" value="F:hemoglobin alpha binding"/>
    <property type="evidence" value="ECO:0007669"/>
    <property type="project" value="TreeGrafter"/>
</dbReference>
<dbReference type="GO" id="GO:0046872">
    <property type="term" value="F:metal ion binding"/>
    <property type="evidence" value="ECO:0007669"/>
    <property type="project" value="UniProtKB-KW"/>
</dbReference>
<dbReference type="GO" id="GO:0043177">
    <property type="term" value="F:organic acid binding"/>
    <property type="evidence" value="ECO:0007669"/>
    <property type="project" value="TreeGrafter"/>
</dbReference>
<dbReference type="GO" id="GO:0019825">
    <property type="term" value="F:oxygen binding"/>
    <property type="evidence" value="ECO:0007669"/>
    <property type="project" value="InterPro"/>
</dbReference>
<dbReference type="GO" id="GO:0005344">
    <property type="term" value="F:oxygen carrier activity"/>
    <property type="evidence" value="ECO:0007669"/>
    <property type="project" value="UniProtKB-KW"/>
</dbReference>
<dbReference type="GO" id="GO:0004601">
    <property type="term" value="F:peroxidase activity"/>
    <property type="evidence" value="ECO:0007669"/>
    <property type="project" value="TreeGrafter"/>
</dbReference>
<dbReference type="GO" id="GO:0042744">
    <property type="term" value="P:hydrogen peroxide catabolic process"/>
    <property type="evidence" value="ECO:0007669"/>
    <property type="project" value="TreeGrafter"/>
</dbReference>
<dbReference type="CDD" id="cd08925">
    <property type="entry name" value="Hb-beta-like"/>
    <property type="match status" value="1"/>
</dbReference>
<dbReference type="FunFam" id="1.10.490.10:FF:000001">
    <property type="entry name" value="Hemoglobin subunit beta"/>
    <property type="match status" value="1"/>
</dbReference>
<dbReference type="Gene3D" id="1.10.490.10">
    <property type="entry name" value="Globins"/>
    <property type="match status" value="1"/>
</dbReference>
<dbReference type="InterPro" id="IPR000971">
    <property type="entry name" value="Globin"/>
</dbReference>
<dbReference type="InterPro" id="IPR009050">
    <property type="entry name" value="Globin-like_sf"/>
</dbReference>
<dbReference type="InterPro" id="IPR012292">
    <property type="entry name" value="Globin/Proto"/>
</dbReference>
<dbReference type="InterPro" id="IPR002337">
    <property type="entry name" value="Hemoglobin_b"/>
</dbReference>
<dbReference type="InterPro" id="IPR050056">
    <property type="entry name" value="Hemoglobin_oxygen_transport"/>
</dbReference>
<dbReference type="PANTHER" id="PTHR11442">
    <property type="entry name" value="HEMOGLOBIN FAMILY MEMBER"/>
    <property type="match status" value="1"/>
</dbReference>
<dbReference type="PANTHER" id="PTHR11442:SF7">
    <property type="entry name" value="HEMOGLOBIN SUBUNIT EPSILON"/>
    <property type="match status" value="1"/>
</dbReference>
<dbReference type="Pfam" id="PF00042">
    <property type="entry name" value="Globin"/>
    <property type="match status" value="1"/>
</dbReference>
<dbReference type="PRINTS" id="PR00814">
    <property type="entry name" value="BETAHAEM"/>
</dbReference>
<dbReference type="SUPFAM" id="SSF46458">
    <property type="entry name" value="Globin-like"/>
    <property type="match status" value="1"/>
</dbReference>
<dbReference type="PROSITE" id="PS01033">
    <property type="entry name" value="GLOBIN"/>
    <property type="match status" value="1"/>
</dbReference>
<comment type="function">
    <text>The epsilon chain is a beta-type chain of early mammalian embryonic hemoglobin.</text>
</comment>
<comment type="subunit">
    <text>Heterotetramer of two alpha chains and two epsilon chains in early embryonic hemoglobin Gower-2; two zeta chains and two epsilon chains in early embryonic hemoglobin Gower-1.</text>
</comment>
<comment type="tissue specificity">
    <text>Red blood cells.</text>
</comment>
<comment type="similarity">
    <text evidence="2">Belongs to the globin family.</text>
</comment>
<feature type="chain" id="PRO_0000053203" description="Hemoglobin subunit epsilon">
    <location>
        <begin position="1"/>
        <end position="147"/>
    </location>
</feature>
<feature type="domain" description="Globin" evidence="2">
    <location>
        <begin position="3"/>
        <end position="147"/>
    </location>
</feature>
<feature type="binding site" description="distal binding residue" evidence="2">
    <location>
        <position position="64"/>
    </location>
    <ligand>
        <name>heme b</name>
        <dbReference type="ChEBI" id="CHEBI:60344"/>
    </ligand>
    <ligandPart>
        <name>Fe</name>
        <dbReference type="ChEBI" id="CHEBI:18248"/>
    </ligandPart>
</feature>
<feature type="binding site" description="proximal binding residue" evidence="2">
    <location>
        <position position="93"/>
    </location>
    <ligand>
        <name>heme b</name>
        <dbReference type="ChEBI" id="CHEBI:60344"/>
    </ligand>
    <ligandPart>
        <name>Fe</name>
        <dbReference type="ChEBI" id="CHEBI:18248"/>
    </ligandPart>
</feature>
<feature type="modified residue" description="Phosphoserine" evidence="1">
    <location>
        <position position="14"/>
    </location>
</feature>
<feature type="modified residue" description="Phosphoserine" evidence="1">
    <location>
        <position position="51"/>
    </location>
</feature>